<gene>
    <name type="ordered locus">USA300HOU_0900</name>
</gene>
<name>Y900_STAAT</name>
<sequence length="78" mass="8657">MNPIVEFCLSNMAKGGDYVFNQLENDPDVDVLEYGCLTHCGICSAGLYALVNGDIVEGDSPEELLQNIYAHIKETWIF</sequence>
<protein>
    <recommendedName>
        <fullName evidence="1">UPF0349 protein USA300HOU_0900</fullName>
    </recommendedName>
</protein>
<reference key="1">
    <citation type="journal article" date="2007" name="BMC Microbiol.">
        <title>Subtle genetic changes enhance virulence of methicillin resistant and sensitive Staphylococcus aureus.</title>
        <authorList>
            <person name="Highlander S.K."/>
            <person name="Hulten K.G."/>
            <person name="Qin X."/>
            <person name="Jiang H."/>
            <person name="Yerrapragada S."/>
            <person name="Mason E.O. Jr."/>
            <person name="Shang Y."/>
            <person name="Williams T.M."/>
            <person name="Fortunov R.M."/>
            <person name="Liu Y."/>
            <person name="Igboeli O."/>
            <person name="Petrosino J."/>
            <person name="Tirumalai M."/>
            <person name="Uzman A."/>
            <person name="Fox G.E."/>
            <person name="Cardenas A.M."/>
            <person name="Muzny D.M."/>
            <person name="Hemphill L."/>
            <person name="Ding Y."/>
            <person name="Dugan S."/>
            <person name="Blyth P.R."/>
            <person name="Buhay C.J."/>
            <person name="Dinh H.H."/>
            <person name="Hawes A.C."/>
            <person name="Holder M."/>
            <person name="Kovar C.L."/>
            <person name="Lee S.L."/>
            <person name="Liu W."/>
            <person name="Nazareth L.V."/>
            <person name="Wang Q."/>
            <person name="Zhou J."/>
            <person name="Kaplan S.L."/>
            <person name="Weinstock G.M."/>
        </authorList>
    </citation>
    <scope>NUCLEOTIDE SEQUENCE [LARGE SCALE GENOMIC DNA]</scope>
    <source>
        <strain>USA300 / TCH1516</strain>
    </source>
</reference>
<evidence type="ECO:0000255" key="1">
    <source>
        <dbReference type="HAMAP-Rule" id="MF_01542"/>
    </source>
</evidence>
<proteinExistence type="inferred from homology"/>
<dbReference type="EMBL" id="CP000730">
    <property type="protein sequence ID" value="ABX28921.1"/>
    <property type="molecule type" value="Genomic_DNA"/>
</dbReference>
<dbReference type="RefSeq" id="WP_001068337.1">
    <property type="nucleotide sequence ID" value="NC_010079.1"/>
</dbReference>
<dbReference type="SMR" id="A8Z1J8"/>
<dbReference type="KEGG" id="sax:USA300HOU_0900"/>
<dbReference type="HOGENOM" id="CLU_182025_0_0_9"/>
<dbReference type="BioCyc" id="SAUR451516-HMP:GTV5-918-MONOMER"/>
<dbReference type="HAMAP" id="MF_01542">
    <property type="entry name" value="UPF0349"/>
    <property type="match status" value="1"/>
</dbReference>
<dbReference type="InterPro" id="IPR009910">
    <property type="entry name" value="DUF1450"/>
</dbReference>
<dbReference type="InterPro" id="IPR022916">
    <property type="entry name" value="UPF0349"/>
</dbReference>
<dbReference type="NCBIfam" id="NF010190">
    <property type="entry name" value="PRK13669.1"/>
    <property type="match status" value="1"/>
</dbReference>
<dbReference type="Pfam" id="PF07293">
    <property type="entry name" value="DUF1450"/>
    <property type="match status" value="1"/>
</dbReference>
<organism>
    <name type="scientific">Staphylococcus aureus (strain USA300 / TCH1516)</name>
    <dbReference type="NCBI Taxonomy" id="451516"/>
    <lineage>
        <taxon>Bacteria</taxon>
        <taxon>Bacillati</taxon>
        <taxon>Bacillota</taxon>
        <taxon>Bacilli</taxon>
        <taxon>Bacillales</taxon>
        <taxon>Staphylococcaceae</taxon>
        <taxon>Staphylococcus</taxon>
    </lineage>
</organism>
<comment type="similarity">
    <text evidence="1">Belongs to the UPF0349 family.</text>
</comment>
<feature type="chain" id="PRO_1000087648" description="UPF0349 protein USA300HOU_0900">
    <location>
        <begin position="1"/>
        <end position="78"/>
    </location>
</feature>
<accession>A8Z1J8</accession>